<gene>
    <name evidence="1" type="primary">rpl15</name>
    <name type="ordered locus">VNG_1718G</name>
</gene>
<keyword id="KW-0903">Direct protein sequencing</keyword>
<keyword id="KW-1185">Reference proteome</keyword>
<keyword id="KW-0687">Ribonucleoprotein</keyword>
<keyword id="KW-0689">Ribosomal protein</keyword>
<keyword id="KW-0694">RNA-binding</keyword>
<keyword id="KW-0699">rRNA-binding</keyword>
<name>RL15_HALSA</name>
<protein>
    <recommendedName>
        <fullName evidence="1">Large ribosomal subunit protein uL15</fullName>
    </recommendedName>
    <alternativeName>
        <fullName evidence="4">50S ribosomal protein L15</fullName>
    </alternativeName>
    <alternativeName>
        <fullName>HL16</fullName>
    </alternativeName>
</protein>
<comment type="function">
    <text evidence="1">Binds to the 23S rRNA.</text>
</comment>
<comment type="subunit">
    <text evidence="1">Part of the 50S ribosomal subunit.</text>
</comment>
<comment type="similarity">
    <text evidence="1">Belongs to the universal ribosomal protein uL15 family.</text>
</comment>
<organism>
    <name type="scientific">Halobacterium salinarum (strain ATCC 700922 / JCM 11081 / NRC-1)</name>
    <name type="common">Halobacterium halobium</name>
    <dbReference type="NCBI Taxonomy" id="64091"/>
    <lineage>
        <taxon>Archaea</taxon>
        <taxon>Methanobacteriati</taxon>
        <taxon>Methanobacteriota</taxon>
        <taxon>Stenosarchaea group</taxon>
        <taxon>Halobacteria</taxon>
        <taxon>Halobacteriales</taxon>
        <taxon>Halobacteriaceae</taxon>
        <taxon>Halobacterium</taxon>
        <taxon>Halobacterium salinarum NRC-34001</taxon>
    </lineage>
</organism>
<reference key="1">
    <citation type="journal article" date="2000" name="Proc. Natl. Acad. Sci. U.S.A.">
        <title>Genome sequence of Halobacterium species NRC-1.</title>
        <authorList>
            <person name="Ng W.V."/>
            <person name="Kennedy S.P."/>
            <person name="Mahairas G.G."/>
            <person name="Berquist B."/>
            <person name="Pan M."/>
            <person name="Shukla H.D."/>
            <person name="Lasky S.R."/>
            <person name="Baliga N.S."/>
            <person name="Thorsson V."/>
            <person name="Sbrogna J."/>
            <person name="Swartzell S."/>
            <person name="Weir D."/>
            <person name="Hall J."/>
            <person name="Dahl T.A."/>
            <person name="Welti R."/>
            <person name="Goo Y.A."/>
            <person name="Leithauser B."/>
            <person name="Keller K."/>
            <person name="Cruz R."/>
            <person name="Danson M.J."/>
            <person name="Hough D.W."/>
            <person name="Maddocks D.G."/>
            <person name="Jablonski P.E."/>
            <person name="Krebs M.P."/>
            <person name="Angevine C.M."/>
            <person name="Dale H."/>
            <person name="Isenbarger T.A."/>
            <person name="Peck R.F."/>
            <person name="Pohlschroder M."/>
            <person name="Spudich J.L."/>
            <person name="Jung K.-H."/>
            <person name="Alam M."/>
            <person name="Freitas T."/>
            <person name="Hou S."/>
            <person name="Daniels C.J."/>
            <person name="Dennis P.P."/>
            <person name="Omer A.D."/>
            <person name="Ebhardt H."/>
            <person name="Lowe T.M."/>
            <person name="Liang P."/>
            <person name="Riley M."/>
            <person name="Hood L."/>
            <person name="DasSarma S."/>
        </authorList>
    </citation>
    <scope>NUCLEOTIDE SEQUENCE [LARGE SCALE GENOMIC DNA]</scope>
    <source>
        <strain>ATCC 700922 / JCM 11081 / NRC-1</strain>
    </source>
</reference>
<reference key="2">
    <citation type="journal article" date="1984" name="Can. J. Biochem. Cell Biol.">
        <title>Purification, properties, and N-terminal amino acid sequence of certain 50S ribosomal subunit proteins from the archaebacterium Halobacterium cutirubrum.</title>
        <authorList>
            <person name="Matheson A.T."/>
            <person name="Yaguchi M."/>
            <person name="Christensen P."/>
            <person name="Rollin C.F."/>
            <person name="Hasnain S."/>
        </authorList>
    </citation>
    <scope>PROTEIN SEQUENCE OF 2-30</scope>
</reference>
<sequence length="153" mass="16728">MTDKKRRQRGSRTHGGGTHKNRRGAGNRGGRGRAGRKKHEQHNYEDVGKSGFKRPEKTDRDVAVLSVQELDEDIPVLSESGVAEETEFGYRVDARDVVDDGWDADVVKVLGGGQLYEQLEVTADAFSDAAVELIEGEGGDAVVSERASEDDEE</sequence>
<feature type="initiator methionine" description="Removed" evidence="3">
    <location>
        <position position="1"/>
    </location>
</feature>
<feature type="chain" id="PRO_0000104861" description="Large ribosomal subunit protein uL15">
    <location>
        <begin position="2"/>
        <end position="153"/>
    </location>
</feature>
<feature type="region of interest" description="Disordered" evidence="2">
    <location>
        <begin position="1"/>
        <end position="60"/>
    </location>
</feature>
<feature type="compositionally biased region" description="Basic residues" evidence="2">
    <location>
        <begin position="1"/>
        <end position="40"/>
    </location>
</feature>
<feature type="compositionally biased region" description="Basic and acidic residues" evidence="2">
    <location>
        <begin position="41"/>
        <end position="60"/>
    </location>
</feature>
<feature type="sequence conflict" description="In Ref. 2; AA sequence." evidence="4" ref="2">
    <original>R</original>
    <variation>S</variation>
    <location>
        <position position="22"/>
    </location>
</feature>
<feature type="sequence conflict" description="In Ref. 2; AA sequence." evidence="4" ref="2">
    <original>G</original>
    <variation>H</variation>
    <location>
        <position position="29"/>
    </location>
</feature>
<proteinExistence type="evidence at protein level"/>
<evidence type="ECO:0000255" key="1">
    <source>
        <dbReference type="HAMAP-Rule" id="MF_01341"/>
    </source>
</evidence>
<evidence type="ECO:0000256" key="2">
    <source>
        <dbReference type="SAM" id="MobiDB-lite"/>
    </source>
</evidence>
<evidence type="ECO:0000269" key="3">
    <source>
    </source>
</evidence>
<evidence type="ECO:0000305" key="4"/>
<accession>P05971</accession>
<accession>Q9HPB2</accession>
<dbReference type="EMBL" id="AE004437">
    <property type="protein sequence ID" value="AAG19958.1"/>
    <property type="molecule type" value="Genomic_DNA"/>
</dbReference>
<dbReference type="PIR" id="B84324">
    <property type="entry name" value="B84324"/>
</dbReference>
<dbReference type="PIR" id="S08555">
    <property type="entry name" value="S08555"/>
</dbReference>
<dbReference type="RefSeq" id="WP_010903256.1">
    <property type="nucleotide sequence ID" value="NC_002607.1"/>
</dbReference>
<dbReference type="SMR" id="P05971"/>
<dbReference type="FunCoup" id="P05971">
    <property type="interactions" value="129"/>
</dbReference>
<dbReference type="STRING" id="64091.VNG_1718G"/>
<dbReference type="PaxDb" id="64091-VNG_1718G"/>
<dbReference type="KEGG" id="hal:VNG_1718G"/>
<dbReference type="PATRIC" id="fig|64091.14.peg.1310"/>
<dbReference type="HOGENOM" id="CLU_109163_0_0_2"/>
<dbReference type="InParanoid" id="P05971"/>
<dbReference type="OrthoDB" id="9418at2157"/>
<dbReference type="PhylomeDB" id="P05971"/>
<dbReference type="Proteomes" id="UP000000554">
    <property type="component" value="Chromosome"/>
</dbReference>
<dbReference type="GO" id="GO:0022625">
    <property type="term" value="C:cytosolic large ribosomal subunit"/>
    <property type="evidence" value="ECO:0000318"/>
    <property type="project" value="GO_Central"/>
</dbReference>
<dbReference type="GO" id="GO:0019843">
    <property type="term" value="F:rRNA binding"/>
    <property type="evidence" value="ECO:0007669"/>
    <property type="project" value="UniProtKB-UniRule"/>
</dbReference>
<dbReference type="GO" id="GO:0003735">
    <property type="term" value="F:structural constituent of ribosome"/>
    <property type="evidence" value="ECO:0000318"/>
    <property type="project" value="GO_Central"/>
</dbReference>
<dbReference type="GO" id="GO:0006412">
    <property type="term" value="P:translation"/>
    <property type="evidence" value="ECO:0007669"/>
    <property type="project" value="UniProtKB-UniRule"/>
</dbReference>
<dbReference type="Gene3D" id="3.100.10.10">
    <property type="match status" value="1"/>
</dbReference>
<dbReference type="Gene3D" id="4.10.990.10">
    <property type="match status" value="1"/>
</dbReference>
<dbReference type="HAMAP" id="MF_01341">
    <property type="entry name" value="Ribosomal_uL15"/>
    <property type="match status" value="1"/>
</dbReference>
<dbReference type="InterPro" id="IPR027386">
    <property type="entry name" value="Rbsml_uL15_N"/>
</dbReference>
<dbReference type="InterPro" id="IPR030878">
    <property type="entry name" value="Ribosomal_uL15"/>
</dbReference>
<dbReference type="InterPro" id="IPR021131">
    <property type="entry name" value="Ribosomal_uL15/eL18"/>
</dbReference>
<dbReference type="InterPro" id="IPR036227">
    <property type="entry name" value="Ribosomal_uL15/eL18_sf"/>
</dbReference>
<dbReference type="InterPro" id="IPR001196">
    <property type="entry name" value="Ribosomal_uL15_CS"/>
</dbReference>
<dbReference type="PANTHER" id="PTHR11721">
    <property type="entry name" value="60S RIBOSOMAL PROTEIN L27A"/>
    <property type="match status" value="1"/>
</dbReference>
<dbReference type="PANTHER" id="PTHR11721:SF3">
    <property type="entry name" value="LARGE RIBOSOMAL SUBUNIT PROTEIN UL15"/>
    <property type="match status" value="1"/>
</dbReference>
<dbReference type="Pfam" id="PF00828">
    <property type="entry name" value="Ribosomal_L27A"/>
    <property type="match status" value="1"/>
</dbReference>
<dbReference type="SUPFAM" id="SSF52080">
    <property type="entry name" value="Ribosomal proteins L15p and L18e"/>
    <property type="match status" value="1"/>
</dbReference>
<dbReference type="PROSITE" id="PS00475">
    <property type="entry name" value="RIBOSOMAL_L15"/>
    <property type="match status" value="1"/>
</dbReference>